<gene>
    <name evidence="1" type="primary">rbsD</name>
    <name type="ordered locus">CPF_1883</name>
</gene>
<reference key="1">
    <citation type="journal article" date="2006" name="Genome Res.">
        <title>Skewed genomic variability in strains of the toxigenic bacterial pathogen, Clostridium perfringens.</title>
        <authorList>
            <person name="Myers G.S.A."/>
            <person name="Rasko D.A."/>
            <person name="Cheung J.K."/>
            <person name="Ravel J."/>
            <person name="Seshadri R."/>
            <person name="DeBoy R.T."/>
            <person name="Ren Q."/>
            <person name="Varga J."/>
            <person name="Awad M.M."/>
            <person name="Brinkac L.M."/>
            <person name="Daugherty S.C."/>
            <person name="Haft D.H."/>
            <person name="Dodson R.J."/>
            <person name="Madupu R."/>
            <person name="Nelson W.C."/>
            <person name="Rosovitz M.J."/>
            <person name="Sullivan S.A."/>
            <person name="Khouri H."/>
            <person name="Dimitrov G.I."/>
            <person name="Watkins K.L."/>
            <person name="Mulligan S."/>
            <person name="Benton J."/>
            <person name="Radune D."/>
            <person name="Fisher D.J."/>
            <person name="Atkins H.S."/>
            <person name="Hiscox T."/>
            <person name="Jost B.H."/>
            <person name="Billington S.J."/>
            <person name="Songer J.G."/>
            <person name="McClane B.A."/>
            <person name="Titball R.W."/>
            <person name="Rood J.I."/>
            <person name="Melville S.B."/>
            <person name="Paulsen I.T."/>
        </authorList>
    </citation>
    <scope>NUCLEOTIDE SEQUENCE [LARGE SCALE GENOMIC DNA]</scope>
    <source>
        <strain>ATCC 13124 / DSM 756 / JCM 1290 / NCIMB 6125 / NCTC 8237 / S 107 / Type A</strain>
    </source>
</reference>
<organism>
    <name type="scientific">Clostridium perfringens (strain ATCC 13124 / DSM 756 / JCM 1290 / NCIMB 6125 / NCTC 8237 / Type A)</name>
    <dbReference type="NCBI Taxonomy" id="195103"/>
    <lineage>
        <taxon>Bacteria</taxon>
        <taxon>Bacillati</taxon>
        <taxon>Bacillota</taxon>
        <taxon>Clostridia</taxon>
        <taxon>Eubacteriales</taxon>
        <taxon>Clostridiaceae</taxon>
        <taxon>Clostridium</taxon>
    </lineage>
</organism>
<sequence length="131" mass="14581">MRKTSLLNSNISSVISKMGHTDMLAIGDCGLPIPKETERIDLALIKGVPGFIETLKAILEELQVEEVLIAKETEKVSPELFTEIKEIIKDTKITFISHEELKKELKDCKAVVRTGEQTPYANIILKSGVVF</sequence>
<accession>Q0TPX4</accession>
<dbReference type="EC" id="5.4.99.62" evidence="1"/>
<dbReference type="EMBL" id="CP000246">
    <property type="protein sequence ID" value="ABG84581.1"/>
    <property type="molecule type" value="Genomic_DNA"/>
</dbReference>
<dbReference type="RefSeq" id="WP_003456057.1">
    <property type="nucleotide sequence ID" value="NC_008261.1"/>
</dbReference>
<dbReference type="SMR" id="Q0TPX4"/>
<dbReference type="STRING" id="195103.CPF_1883"/>
<dbReference type="PaxDb" id="195103-CPF_1883"/>
<dbReference type="GeneID" id="93001832"/>
<dbReference type="KEGG" id="cpf:CPF_1883"/>
<dbReference type="eggNOG" id="COG1869">
    <property type="taxonomic scope" value="Bacteria"/>
</dbReference>
<dbReference type="HOGENOM" id="CLU_135498_0_0_9"/>
<dbReference type="UniPathway" id="UPA00916">
    <property type="reaction ID" value="UER00888"/>
</dbReference>
<dbReference type="Proteomes" id="UP000001823">
    <property type="component" value="Chromosome"/>
</dbReference>
<dbReference type="GO" id="GO:0005829">
    <property type="term" value="C:cytosol"/>
    <property type="evidence" value="ECO:0007669"/>
    <property type="project" value="TreeGrafter"/>
</dbReference>
<dbReference type="GO" id="GO:0062193">
    <property type="term" value="F:D-ribose pyranase activity"/>
    <property type="evidence" value="ECO:0007669"/>
    <property type="project" value="UniProtKB-EC"/>
</dbReference>
<dbReference type="GO" id="GO:0016872">
    <property type="term" value="F:intramolecular lyase activity"/>
    <property type="evidence" value="ECO:0007669"/>
    <property type="project" value="UniProtKB-UniRule"/>
</dbReference>
<dbReference type="GO" id="GO:0048029">
    <property type="term" value="F:monosaccharide binding"/>
    <property type="evidence" value="ECO:0007669"/>
    <property type="project" value="InterPro"/>
</dbReference>
<dbReference type="GO" id="GO:0019303">
    <property type="term" value="P:D-ribose catabolic process"/>
    <property type="evidence" value="ECO:0007669"/>
    <property type="project" value="UniProtKB-UniRule"/>
</dbReference>
<dbReference type="Gene3D" id="3.40.1650.10">
    <property type="entry name" value="RbsD-like domain"/>
    <property type="match status" value="1"/>
</dbReference>
<dbReference type="HAMAP" id="MF_01661">
    <property type="entry name" value="D_rib_pyranase"/>
    <property type="match status" value="1"/>
</dbReference>
<dbReference type="InterPro" id="IPR023064">
    <property type="entry name" value="D-ribose_pyranase"/>
</dbReference>
<dbReference type="InterPro" id="IPR023750">
    <property type="entry name" value="RbsD-like_sf"/>
</dbReference>
<dbReference type="InterPro" id="IPR007721">
    <property type="entry name" value="RbsD_FucU"/>
</dbReference>
<dbReference type="NCBIfam" id="NF008761">
    <property type="entry name" value="PRK11797.1"/>
    <property type="match status" value="1"/>
</dbReference>
<dbReference type="PANTHER" id="PTHR37831">
    <property type="entry name" value="D-RIBOSE PYRANASE"/>
    <property type="match status" value="1"/>
</dbReference>
<dbReference type="PANTHER" id="PTHR37831:SF1">
    <property type="entry name" value="D-RIBOSE PYRANASE"/>
    <property type="match status" value="1"/>
</dbReference>
<dbReference type="Pfam" id="PF05025">
    <property type="entry name" value="RbsD_FucU"/>
    <property type="match status" value="1"/>
</dbReference>
<dbReference type="SUPFAM" id="SSF102546">
    <property type="entry name" value="RbsD-like"/>
    <property type="match status" value="1"/>
</dbReference>
<name>RBSD_CLOP1</name>
<comment type="function">
    <text evidence="1">Catalyzes the interconversion of beta-pyran and beta-furan forms of D-ribose.</text>
</comment>
<comment type="catalytic activity">
    <reaction evidence="1">
        <text>beta-D-ribopyranose = beta-D-ribofuranose</text>
        <dbReference type="Rhea" id="RHEA:25432"/>
        <dbReference type="ChEBI" id="CHEBI:27476"/>
        <dbReference type="ChEBI" id="CHEBI:47002"/>
        <dbReference type="EC" id="5.4.99.62"/>
    </reaction>
</comment>
<comment type="pathway">
    <text evidence="1">Carbohydrate metabolism; D-ribose degradation; D-ribose 5-phosphate from beta-D-ribopyranose: step 1/2.</text>
</comment>
<comment type="subunit">
    <text evidence="1">Homodecamer.</text>
</comment>
<comment type="subcellular location">
    <subcellularLocation>
        <location evidence="1">Cytoplasm</location>
    </subcellularLocation>
</comment>
<comment type="similarity">
    <text evidence="1">Belongs to the RbsD / FucU family. RbsD subfamily.</text>
</comment>
<evidence type="ECO:0000255" key="1">
    <source>
        <dbReference type="HAMAP-Rule" id="MF_01661"/>
    </source>
</evidence>
<feature type="chain" id="PRO_0000346186" description="D-ribose pyranase">
    <location>
        <begin position="1"/>
        <end position="131"/>
    </location>
</feature>
<feature type="active site" description="Proton donor" evidence="1">
    <location>
        <position position="20"/>
    </location>
</feature>
<feature type="binding site" evidence="1">
    <location>
        <position position="28"/>
    </location>
    <ligand>
        <name>substrate</name>
    </ligand>
</feature>
<feature type="binding site" evidence="1">
    <location>
        <position position="98"/>
    </location>
    <ligand>
        <name>substrate</name>
    </ligand>
</feature>
<feature type="binding site" evidence="1">
    <location>
        <begin position="120"/>
        <end position="122"/>
    </location>
    <ligand>
        <name>substrate</name>
    </ligand>
</feature>
<protein>
    <recommendedName>
        <fullName evidence="1">D-ribose pyranase</fullName>
        <ecNumber evidence="1">5.4.99.62</ecNumber>
    </recommendedName>
</protein>
<keyword id="KW-0119">Carbohydrate metabolism</keyword>
<keyword id="KW-0963">Cytoplasm</keyword>
<keyword id="KW-0413">Isomerase</keyword>
<proteinExistence type="inferred from homology"/>